<sequence length="489" mass="52383">MSVYGLQRLYIGGGYVDATSGKTFDTFDPATGDLLAQVQQASAADVDRAIASAQEGQREWAAMTAMQRSRILRRAVELLRERNDELAALETRDTGKPIAETLAVDIVTGADVIEYYAGLATAIEGLQVPLRADSFVYTRREPLGVCAGIGAWNYPIQIACWKTAPALAAGNAMVFKPSEVTPLSALKLAEIYTEAGVPAGVFNVVQGDGSVGALLTGHPDIAKVSFTGGVETGKKVMSLAGASSLKEVTMELGGKSPLIVFDDADLDRAADIAVTANFFSSGQVCTNGTRVFVHRSIKDAFTQKVLERVKRIRVGKPTDADTNFGPLVSAAQLDKVLGFIESGKAEGAKLLAGGTRLTEGHFANGQYVAPTVFGDCRDDMKIVREEIFGPVMSILEFESEDEVIARANDTHYGLAAGVVTENLSRAHRTIHRLEAGICWINTWGESPAEMPVGGYKQSGVGRENGITTLEHYTRIKSVQVELGRYNPVF</sequence>
<comment type="function">
    <text evidence="1">Involved in the biosynthesis of the osmoprotectant glycine betaine. Catalyzes the irreversible oxidation of betaine aldehyde to the corresponding acid.</text>
</comment>
<comment type="catalytic activity">
    <reaction evidence="1">
        <text>betaine aldehyde + NAD(+) + H2O = glycine betaine + NADH + 2 H(+)</text>
        <dbReference type="Rhea" id="RHEA:15305"/>
        <dbReference type="ChEBI" id="CHEBI:15377"/>
        <dbReference type="ChEBI" id="CHEBI:15378"/>
        <dbReference type="ChEBI" id="CHEBI:15710"/>
        <dbReference type="ChEBI" id="CHEBI:17750"/>
        <dbReference type="ChEBI" id="CHEBI:57540"/>
        <dbReference type="ChEBI" id="CHEBI:57945"/>
        <dbReference type="EC" id="1.2.1.8"/>
    </reaction>
    <physiologicalReaction direction="left-to-right" evidence="1">
        <dbReference type="Rhea" id="RHEA:15306"/>
    </physiologicalReaction>
</comment>
<comment type="cofactor">
    <cofactor evidence="1">
        <name>K(+)</name>
        <dbReference type="ChEBI" id="CHEBI:29103"/>
    </cofactor>
    <text evidence="1">Binds 2 potassium ions per subunit.</text>
</comment>
<comment type="pathway">
    <text evidence="1">Amine and polyamine biosynthesis; betaine biosynthesis via choline pathway; betaine from betaine aldehyde: step 1/1.</text>
</comment>
<comment type="subunit">
    <text evidence="1">Dimer of dimers.</text>
</comment>
<comment type="similarity">
    <text evidence="1">Belongs to the aldehyde dehydrogenase family.</text>
</comment>
<accession>A9AN00</accession>
<proteinExistence type="inferred from homology"/>
<name>BETB_BURM1</name>
<organism>
    <name type="scientific">Burkholderia multivorans (strain ATCC 17616 / 249)</name>
    <dbReference type="NCBI Taxonomy" id="395019"/>
    <lineage>
        <taxon>Bacteria</taxon>
        <taxon>Pseudomonadati</taxon>
        <taxon>Pseudomonadota</taxon>
        <taxon>Betaproteobacteria</taxon>
        <taxon>Burkholderiales</taxon>
        <taxon>Burkholderiaceae</taxon>
        <taxon>Burkholderia</taxon>
        <taxon>Burkholderia cepacia complex</taxon>
    </lineage>
</organism>
<reference key="1">
    <citation type="submission" date="2007-10" db="EMBL/GenBank/DDBJ databases">
        <title>Complete sequence of chromosome 2 of Burkholderia multivorans ATCC 17616.</title>
        <authorList>
            <person name="Copeland A."/>
            <person name="Lucas S."/>
            <person name="Lapidus A."/>
            <person name="Barry K."/>
            <person name="Glavina del Rio T."/>
            <person name="Dalin E."/>
            <person name="Tice H."/>
            <person name="Pitluck S."/>
            <person name="Chain P."/>
            <person name="Malfatti S."/>
            <person name="Shin M."/>
            <person name="Vergez L."/>
            <person name="Schmutz J."/>
            <person name="Larimer F."/>
            <person name="Land M."/>
            <person name="Hauser L."/>
            <person name="Kyrpides N."/>
            <person name="Kim E."/>
            <person name="Tiedje J."/>
            <person name="Richardson P."/>
        </authorList>
    </citation>
    <scope>NUCLEOTIDE SEQUENCE [LARGE SCALE GENOMIC DNA]</scope>
    <source>
        <strain>ATCC 17616 / 249</strain>
    </source>
</reference>
<reference key="2">
    <citation type="submission" date="2007-04" db="EMBL/GenBank/DDBJ databases">
        <title>Complete genome sequence of Burkholderia multivorans ATCC 17616.</title>
        <authorList>
            <person name="Ohtsubo Y."/>
            <person name="Yamashita A."/>
            <person name="Kurokawa K."/>
            <person name="Takami H."/>
            <person name="Yuhara S."/>
            <person name="Nishiyama E."/>
            <person name="Endo R."/>
            <person name="Miyazaki R."/>
            <person name="Ono A."/>
            <person name="Yano K."/>
            <person name="Ito M."/>
            <person name="Sota M."/>
            <person name="Yuji N."/>
            <person name="Hattori M."/>
            <person name="Tsuda M."/>
        </authorList>
    </citation>
    <scope>NUCLEOTIDE SEQUENCE [LARGE SCALE GENOMIC DNA]</scope>
    <source>
        <strain>ATCC 17616 / 249</strain>
    </source>
</reference>
<gene>
    <name evidence="1" type="primary">betB</name>
    <name type="ordered locus">Bmul_3537</name>
    <name type="ordered locus">BMULJ_04980</name>
</gene>
<feature type="chain" id="PRO_1000133943" description="Betaine aldehyde dehydrogenase">
    <location>
        <begin position="1"/>
        <end position="489"/>
    </location>
</feature>
<feature type="active site" description="Charge relay system" evidence="1">
    <location>
        <position position="162"/>
    </location>
</feature>
<feature type="active site" description="Proton acceptor" evidence="1">
    <location>
        <position position="251"/>
    </location>
</feature>
<feature type="active site" description="Nucleophile" evidence="1">
    <location>
        <position position="285"/>
    </location>
</feature>
<feature type="active site" description="Charge relay system" evidence="1">
    <location>
        <position position="463"/>
    </location>
</feature>
<feature type="binding site" evidence="1">
    <location>
        <position position="26"/>
    </location>
    <ligand>
        <name>K(+)</name>
        <dbReference type="ChEBI" id="CHEBI:29103"/>
        <label>1</label>
    </ligand>
</feature>
<feature type="binding site" evidence="1">
    <location>
        <position position="93"/>
    </location>
    <ligand>
        <name>K(+)</name>
        <dbReference type="ChEBI" id="CHEBI:29103"/>
        <label>1</label>
    </ligand>
</feature>
<feature type="binding site" evidence="1">
    <location>
        <begin position="150"/>
        <end position="152"/>
    </location>
    <ligand>
        <name>NAD(+)</name>
        <dbReference type="ChEBI" id="CHEBI:57540"/>
    </ligand>
</feature>
<feature type="binding site" evidence="1">
    <location>
        <begin position="176"/>
        <end position="179"/>
    </location>
    <ligand>
        <name>NAD(+)</name>
        <dbReference type="ChEBI" id="CHEBI:57540"/>
    </ligand>
</feature>
<feature type="binding site" evidence="1">
    <location>
        <position position="180"/>
    </location>
    <ligand>
        <name>K(+)</name>
        <dbReference type="ChEBI" id="CHEBI:29103"/>
        <label>1</label>
    </ligand>
</feature>
<feature type="binding site" evidence="1">
    <location>
        <begin position="229"/>
        <end position="232"/>
    </location>
    <ligand>
        <name>NAD(+)</name>
        <dbReference type="ChEBI" id="CHEBI:57540"/>
    </ligand>
</feature>
<feature type="binding site" evidence="1">
    <location>
        <position position="245"/>
    </location>
    <ligand>
        <name>K(+)</name>
        <dbReference type="ChEBI" id="CHEBI:29103"/>
        <label>2</label>
    </ligand>
</feature>
<feature type="binding site" evidence="1">
    <location>
        <position position="253"/>
    </location>
    <ligand>
        <name>NAD(+)</name>
        <dbReference type="ChEBI" id="CHEBI:57540"/>
    </ligand>
</feature>
<feature type="binding site" description="covalent" evidence="1">
    <location>
        <position position="285"/>
    </location>
    <ligand>
        <name>NAD(+)</name>
        <dbReference type="ChEBI" id="CHEBI:57540"/>
    </ligand>
</feature>
<feature type="binding site" evidence="1">
    <location>
        <position position="386"/>
    </location>
    <ligand>
        <name>NAD(+)</name>
        <dbReference type="ChEBI" id="CHEBI:57540"/>
    </ligand>
</feature>
<feature type="binding site" evidence="1">
    <location>
        <position position="456"/>
    </location>
    <ligand>
        <name>K(+)</name>
        <dbReference type="ChEBI" id="CHEBI:29103"/>
        <label>2</label>
    </ligand>
</feature>
<feature type="binding site" evidence="1">
    <location>
        <position position="459"/>
    </location>
    <ligand>
        <name>K(+)</name>
        <dbReference type="ChEBI" id="CHEBI:29103"/>
        <label>2</label>
    </ligand>
</feature>
<feature type="site" description="Seems to be a necessary countercharge to the potassium cations" evidence="1">
    <location>
        <position position="247"/>
    </location>
</feature>
<feature type="modified residue" description="Cysteine sulfenic acid (-SOH)" evidence="1">
    <location>
        <position position="285"/>
    </location>
</feature>
<protein>
    <recommendedName>
        <fullName evidence="1">Betaine aldehyde dehydrogenase</fullName>
        <shortName evidence="1">BADH</shortName>
        <ecNumber evidence="1">1.2.1.8</ecNumber>
    </recommendedName>
</protein>
<keyword id="KW-0479">Metal-binding</keyword>
<keyword id="KW-0520">NAD</keyword>
<keyword id="KW-0521">NADP</keyword>
<keyword id="KW-0558">Oxidation</keyword>
<keyword id="KW-0560">Oxidoreductase</keyword>
<keyword id="KW-0630">Potassium</keyword>
<keyword id="KW-1185">Reference proteome</keyword>
<dbReference type="EC" id="1.2.1.8" evidence="1"/>
<dbReference type="EMBL" id="CP000869">
    <property type="protein sequence ID" value="ABX17221.1"/>
    <property type="molecule type" value="Genomic_DNA"/>
</dbReference>
<dbReference type="EMBL" id="AP009386">
    <property type="protein sequence ID" value="BAG46826.1"/>
    <property type="molecule type" value="Genomic_DNA"/>
</dbReference>
<dbReference type="RefSeq" id="WP_012216460.1">
    <property type="nucleotide sequence ID" value="NC_010086.1"/>
</dbReference>
<dbReference type="SMR" id="A9AN00"/>
<dbReference type="STRING" id="395019.BMULJ_04980"/>
<dbReference type="KEGG" id="bmj:BMULJ_04980"/>
<dbReference type="KEGG" id="bmu:Bmul_3537"/>
<dbReference type="eggNOG" id="COG1012">
    <property type="taxonomic scope" value="Bacteria"/>
</dbReference>
<dbReference type="HOGENOM" id="CLU_005391_1_0_4"/>
<dbReference type="UniPathway" id="UPA00529">
    <property type="reaction ID" value="UER00386"/>
</dbReference>
<dbReference type="Proteomes" id="UP000008815">
    <property type="component" value="Chromosome 2"/>
</dbReference>
<dbReference type="GO" id="GO:0008802">
    <property type="term" value="F:betaine-aldehyde dehydrogenase (NAD+) activity"/>
    <property type="evidence" value="ECO:0007669"/>
    <property type="project" value="UniProtKB-UniRule"/>
</dbReference>
<dbReference type="GO" id="GO:0046872">
    <property type="term" value="F:metal ion binding"/>
    <property type="evidence" value="ECO:0007669"/>
    <property type="project" value="UniProtKB-KW"/>
</dbReference>
<dbReference type="GO" id="GO:0019285">
    <property type="term" value="P:glycine betaine biosynthetic process from choline"/>
    <property type="evidence" value="ECO:0007669"/>
    <property type="project" value="UniProtKB-UniRule"/>
</dbReference>
<dbReference type="CDD" id="cd07090">
    <property type="entry name" value="ALDH_F9_TMBADH"/>
    <property type="match status" value="1"/>
</dbReference>
<dbReference type="FunFam" id="3.40.309.10:FF:000014">
    <property type="entry name" value="NAD/NADP-dependent betaine aldehyde dehydrogenase"/>
    <property type="match status" value="1"/>
</dbReference>
<dbReference type="FunFam" id="3.40.605.10:FF:000007">
    <property type="entry name" value="NAD/NADP-dependent betaine aldehyde dehydrogenase"/>
    <property type="match status" value="1"/>
</dbReference>
<dbReference type="Gene3D" id="3.40.605.10">
    <property type="entry name" value="Aldehyde Dehydrogenase, Chain A, domain 1"/>
    <property type="match status" value="1"/>
</dbReference>
<dbReference type="Gene3D" id="3.40.309.10">
    <property type="entry name" value="Aldehyde Dehydrogenase, Chain A, domain 2"/>
    <property type="match status" value="1"/>
</dbReference>
<dbReference type="HAMAP" id="MF_00804">
    <property type="entry name" value="BADH"/>
    <property type="match status" value="1"/>
</dbReference>
<dbReference type="InterPro" id="IPR016161">
    <property type="entry name" value="Ald_DH/histidinol_DH"/>
</dbReference>
<dbReference type="InterPro" id="IPR016163">
    <property type="entry name" value="Ald_DH_C"/>
</dbReference>
<dbReference type="InterPro" id="IPR016160">
    <property type="entry name" value="Ald_DH_CS_CYS"/>
</dbReference>
<dbReference type="InterPro" id="IPR029510">
    <property type="entry name" value="Ald_DH_CS_GLU"/>
</dbReference>
<dbReference type="InterPro" id="IPR016162">
    <property type="entry name" value="Ald_DH_N"/>
</dbReference>
<dbReference type="InterPro" id="IPR015590">
    <property type="entry name" value="Aldehyde_DH_dom"/>
</dbReference>
<dbReference type="InterPro" id="IPR011264">
    <property type="entry name" value="BADH"/>
</dbReference>
<dbReference type="NCBIfam" id="TIGR01804">
    <property type="entry name" value="BADH"/>
    <property type="match status" value="1"/>
</dbReference>
<dbReference type="NCBIfam" id="NF009725">
    <property type="entry name" value="PRK13252.1"/>
    <property type="match status" value="1"/>
</dbReference>
<dbReference type="PANTHER" id="PTHR11699">
    <property type="entry name" value="ALDEHYDE DEHYDROGENASE-RELATED"/>
    <property type="match status" value="1"/>
</dbReference>
<dbReference type="Pfam" id="PF00171">
    <property type="entry name" value="Aldedh"/>
    <property type="match status" value="1"/>
</dbReference>
<dbReference type="SUPFAM" id="SSF53720">
    <property type="entry name" value="ALDH-like"/>
    <property type="match status" value="1"/>
</dbReference>
<dbReference type="PROSITE" id="PS00070">
    <property type="entry name" value="ALDEHYDE_DEHYDR_CYS"/>
    <property type="match status" value="1"/>
</dbReference>
<dbReference type="PROSITE" id="PS00687">
    <property type="entry name" value="ALDEHYDE_DEHYDR_GLU"/>
    <property type="match status" value="1"/>
</dbReference>
<evidence type="ECO:0000255" key="1">
    <source>
        <dbReference type="HAMAP-Rule" id="MF_00804"/>
    </source>
</evidence>